<name>UPPP_SULTO</name>
<dbReference type="EC" id="3.6.1.27" evidence="1"/>
<dbReference type="EMBL" id="BA000023">
    <property type="protein sequence ID" value="BAK54673.1"/>
    <property type="molecule type" value="Genomic_DNA"/>
</dbReference>
<dbReference type="RefSeq" id="WP_010979881.1">
    <property type="nucleotide sequence ID" value="NC_003106.2"/>
</dbReference>
<dbReference type="SMR" id="Q96ZM1"/>
<dbReference type="STRING" id="273063.STK_18130"/>
<dbReference type="GeneID" id="1459869"/>
<dbReference type="KEGG" id="sto:STK_18130"/>
<dbReference type="PATRIC" id="fig|273063.9.peg.2069"/>
<dbReference type="eggNOG" id="arCOG04761">
    <property type="taxonomic scope" value="Archaea"/>
</dbReference>
<dbReference type="OrthoDB" id="65864at2157"/>
<dbReference type="Proteomes" id="UP000001015">
    <property type="component" value="Chromosome"/>
</dbReference>
<dbReference type="GO" id="GO:0005886">
    <property type="term" value="C:plasma membrane"/>
    <property type="evidence" value="ECO:0007669"/>
    <property type="project" value="UniProtKB-SubCell"/>
</dbReference>
<dbReference type="GO" id="GO:0050380">
    <property type="term" value="F:undecaprenyl-diphosphatase activity"/>
    <property type="evidence" value="ECO:0007669"/>
    <property type="project" value="UniProtKB-UniRule"/>
</dbReference>
<dbReference type="HAMAP" id="MF_01006">
    <property type="entry name" value="Undec_diphosphatase"/>
    <property type="match status" value="1"/>
</dbReference>
<dbReference type="InterPro" id="IPR003824">
    <property type="entry name" value="UppP"/>
</dbReference>
<dbReference type="NCBIfam" id="NF001398">
    <property type="entry name" value="PRK00281.3-5"/>
    <property type="match status" value="1"/>
</dbReference>
<dbReference type="PANTHER" id="PTHR30622">
    <property type="entry name" value="UNDECAPRENYL-DIPHOSPHATASE"/>
    <property type="match status" value="1"/>
</dbReference>
<dbReference type="PANTHER" id="PTHR30622:SF2">
    <property type="entry name" value="UNDECAPRENYL-DIPHOSPHATASE"/>
    <property type="match status" value="1"/>
</dbReference>
<dbReference type="Pfam" id="PF02673">
    <property type="entry name" value="BacA"/>
    <property type="match status" value="1"/>
</dbReference>
<evidence type="ECO:0000255" key="1">
    <source>
        <dbReference type="HAMAP-Rule" id="MF_01006"/>
    </source>
</evidence>
<gene>
    <name evidence="1" type="primary">uppP</name>
    <name type="synonym">bacA</name>
    <name type="synonym">upk</name>
    <name type="ordered locus">STK_18130</name>
</gene>
<proteinExistence type="inferred from homology"/>
<feature type="chain" id="PRO_0000151255" description="Undecaprenyl-diphosphatase">
    <location>
        <begin position="1"/>
        <end position="264"/>
    </location>
</feature>
<feature type="transmembrane region" description="Helical" evidence="1">
    <location>
        <begin position="34"/>
        <end position="54"/>
    </location>
</feature>
<feature type="transmembrane region" description="Helical" evidence="1">
    <location>
        <begin position="75"/>
        <end position="95"/>
    </location>
</feature>
<feature type="transmembrane region" description="Helical" evidence="1">
    <location>
        <begin position="104"/>
        <end position="124"/>
    </location>
</feature>
<feature type="transmembrane region" description="Helical" evidence="1">
    <location>
        <begin position="137"/>
        <end position="157"/>
    </location>
</feature>
<feature type="transmembrane region" description="Helical" evidence="1">
    <location>
        <begin position="180"/>
        <end position="200"/>
    </location>
</feature>
<feature type="transmembrane region" description="Helical" evidence="1">
    <location>
        <begin position="207"/>
        <end position="227"/>
    </location>
</feature>
<feature type="transmembrane region" description="Helical" evidence="1">
    <location>
        <begin position="243"/>
        <end position="263"/>
    </location>
</feature>
<keyword id="KW-1003">Cell membrane</keyword>
<keyword id="KW-0378">Hydrolase</keyword>
<keyword id="KW-0472">Membrane</keyword>
<keyword id="KW-1185">Reference proteome</keyword>
<keyword id="KW-0812">Transmembrane</keyword>
<keyword id="KW-1133">Transmembrane helix</keyword>
<accession>Q96ZM1</accession>
<accession>F9VNM7</accession>
<sequence length="264" mass="28827">MNLLDIIIIGIVQGISEWLPISSKTQVLISSHYLLNLPIAIAYSFGLFMEMGSIGSATIYFRKDIMSVFRDRKLLLYLAIITIITGLVGVPLYIISDKLLKNAYDPSIPMIILGIALIVDGLYIRYSRIKIRSFKDLSLKNIILIGIAQGLAALPGVSRSGMTVSTMLFLGIKPDDAFRYSYLAYIPAAVGAVGTTILFSKTNISYVISLIGIGGVLISVISAFIIGMLTIDLLLRFAKRRNIYIIDFTLGGIAIVVSVLTILI</sequence>
<reference key="1">
    <citation type="journal article" date="2001" name="DNA Res.">
        <title>Complete genome sequence of an aerobic thermoacidophilic Crenarchaeon, Sulfolobus tokodaii strain7.</title>
        <authorList>
            <person name="Kawarabayasi Y."/>
            <person name="Hino Y."/>
            <person name="Horikawa H."/>
            <person name="Jin-no K."/>
            <person name="Takahashi M."/>
            <person name="Sekine M."/>
            <person name="Baba S."/>
            <person name="Ankai A."/>
            <person name="Kosugi H."/>
            <person name="Hosoyama A."/>
            <person name="Fukui S."/>
            <person name="Nagai Y."/>
            <person name="Nishijima K."/>
            <person name="Otsuka R."/>
            <person name="Nakazawa H."/>
            <person name="Takamiya M."/>
            <person name="Kato Y."/>
            <person name="Yoshizawa T."/>
            <person name="Tanaka T."/>
            <person name="Kudoh Y."/>
            <person name="Yamazaki J."/>
            <person name="Kushida N."/>
            <person name="Oguchi A."/>
            <person name="Aoki K."/>
            <person name="Masuda S."/>
            <person name="Yanagii M."/>
            <person name="Nishimura M."/>
            <person name="Yamagishi A."/>
            <person name="Oshima T."/>
            <person name="Kikuchi H."/>
        </authorList>
    </citation>
    <scope>NUCLEOTIDE SEQUENCE [LARGE SCALE GENOMIC DNA]</scope>
    <source>
        <strain>DSM 16993 / JCM 10545 / NBRC 100140 / 7</strain>
    </source>
</reference>
<protein>
    <recommendedName>
        <fullName evidence="1">Undecaprenyl-diphosphatase</fullName>
        <ecNumber evidence="1">3.6.1.27</ecNumber>
    </recommendedName>
    <alternativeName>
        <fullName evidence="1">Undecaprenyl pyrophosphate phosphatase</fullName>
    </alternativeName>
</protein>
<comment type="function">
    <text evidence="1">Catalyzes the dephosphorylation of undecaprenyl diphosphate (UPP).</text>
</comment>
<comment type="catalytic activity">
    <reaction evidence="1">
        <text>di-trans,octa-cis-undecaprenyl diphosphate + H2O = di-trans,octa-cis-undecaprenyl phosphate + phosphate + H(+)</text>
        <dbReference type="Rhea" id="RHEA:28094"/>
        <dbReference type="ChEBI" id="CHEBI:15377"/>
        <dbReference type="ChEBI" id="CHEBI:15378"/>
        <dbReference type="ChEBI" id="CHEBI:43474"/>
        <dbReference type="ChEBI" id="CHEBI:58405"/>
        <dbReference type="ChEBI" id="CHEBI:60392"/>
        <dbReference type="EC" id="3.6.1.27"/>
    </reaction>
</comment>
<comment type="subcellular location">
    <subcellularLocation>
        <location evidence="1">Cell membrane</location>
        <topology evidence="1">Multi-pass membrane protein</topology>
    </subcellularLocation>
</comment>
<comment type="similarity">
    <text evidence="1">Belongs to the UppP family.</text>
</comment>
<organism>
    <name type="scientific">Sulfurisphaera tokodaii (strain DSM 16993 / JCM 10545 / NBRC 100140 / 7)</name>
    <name type="common">Sulfolobus tokodaii</name>
    <dbReference type="NCBI Taxonomy" id="273063"/>
    <lineage>
        <taxon>Archaea</taxon>
        <taxon>Thermoproteota</taxon>
        <taxon>Thermoprotei</taxon>
        <taxon>Sulfolobales</taxon>
        <taxon>Sulfolobaceae</taxon>
        <taxon>Sulfurisphaera</taxon>
    </lineage>
</organism>